<evidence type="ECO:0000255" key="1">
    <source>
        <dbReference type="HAMAP-Rule" id="MF_01224"/>
    </source>
</evidence>
<feature type="chain" id="PRO_0000097807" description="Cyclic pyranopterin monophosphate synthase">
    <location>
        <begin position="1"/>
        <end position="160"/>
    </location>
</feature>
<feature type="active site" evidence="1">
    <location>
        <position position="129"/>
    </location>
</feature>
<feature type="binding site" evidence="1">
    <location>
        <begin position="77"/>
        <end position="79"/>
    </location>
    <ligand>
        <name>substrate</name>
    </ligand>
</feature>
<feature type="binding site" evidence="1">
    <location>
        <begin position="114"/>
        <end position="115"/>
    </location>
    <ligand>
        <name>substrate</name>
    </ligand>
</feature>
<organism>
    <name type="scientific">Listeria innocua serovar 6a (strain ATCC BAA-680 / CLIP 11262)</name>
    <dbReference type="NCBI Taxonomy" id="272626"/>
    <lineage>
        <taxon>Bacteria</taxon>
        <taxon>Bacillati</taxon>
        <taxon>Bacillota</taxon>
        <taxon>Bacilli</taxon>
        <taxon>Bacillales</taxon>
        <taxon>Listeriaceae</taxon>
        <taxon>Listeria</taxon>
    </lineage>
</organism>
<reference key="1">
    <citation type="journal article" date="2001" name="Science">
        <title>Comparative genomics of Listeria species.</title>
        <authorList>
            <person name="Glaser P."/>
            <person name="Frangeul L."/>
            <person name="Buchrieser C."/>
            <person name="Rusniok C."/>
            <person name="Amend A."/>
            <person name="Baquero F."/>
            <person name="Berche P."/>
            <person name="Bloecker H."/>
            <person name="Brandt P."/>
            <person name="Chakraborty T."/>
            <person name="Charbit A."/>
            <person name="Chetouani F."/>
            <person name="Couve E."/>
            <person name="de Daruvar A."/>
            <person name="Dehoux P."/>
            <person name="Domann E."/>
            <person name="Dominguez-Bernal G."/>
            <person name="Duchaud E."/>
            <person name="Durant L."/>
            <person name="Dussurget O."/>
            <person name="Entian K.-D."/>
            <person name="Fsihi H."/>
            <person name="Garcia-del Portillo F."/>
            <person name="Garrido P."/>
            <person name="Gautier L."/>
            <person name="Goebel W."/>
            <person name="Gomez-Lopez N."/>
            <person name="Hain T."/>
            <person name="Hauf J."/>
            <person name="Jackson D."/>
            <person name="Jones L.-M."/>
            <person name="Kaerst U."/>
            <person name="Kreft J."/>
            <person name="Kuhn M."/>
            <person name="Kunst F."/>
            <person name="Kurapkat G."/>
            <person name="Madueno E."/>
            <person name="Maitournam A."/>
            <person name="Mata Vicente J."/>
            <person name="Ng E."/>
            <person name="Nedjari H."/>
            <person name="Nordsiek G."/>
            <person name="Novella S."/>
            <person name="de Pablos B."/>
            <person name="Perez-Diaz J.-C."/>
            <person name="Purcell R."/>
            <person name="Remmel B."/>
            <person name="Rose M."/>
            <person name="Schlueter T."/>
            <person name="Simoes N."/>
            <person name="Tierrez A."/>
            <person name="Vazquez-Boland J.-A."/>
            <person name="Voss H."/>
            <person name="Wehland J."/>
            <person name="Cossart P."/>
        </authorList>
    </citation>
    <scope>NUCLEOTIDE SEQUENCE [LARGE SCALE GENOMIC DNA]</scope>
    <source>
        <strain>ATCC BAA-680 / CLIP 11262</strain>
    </source>
</reference>
<name>MOAC_LISIN</name>
<gene>
    <name evidence="1" type="primary">moaC</name>
    <name type="ordered locus">lin1038</name>
</gene>
<keyword id="KW-0456">Lyase</keyword>
<keyword id="KW-0501">Molybdenum cofactor biosynthesis</keyword>
<sequence length="160" mass="17281">MDKDDLTHFNDEKRAKMVDVTSKSETKRRAIARATIHMNEETLARIHAGKIAKGDVLAVAQVAGIMAAKKTSELIPMCHPIMTTKADISFDDDGKTALTITSEVVTVGKTGVEMEALTAVTIAALTIYDMCKAMDKGMQIEKTYLVEKTGGKSGTFKAEA</sequence>
<comment type="function">
    <text evidence="1">Catalyzes the conversion of (8S)-3',8-cyclo-7,8-dihydroguanosine 5'-triphosphate to cyclic pyranopterin monophosphate (cPMP).</text>
</comment>
<comment type="catalytic activity">
    <reaction evidence="1">
        <text>(8S)-3',8-cyclo-7,8-dihydroguanosine 5'-triphosphate = cyclic pyranopterin phosphate + diphosphate</text>
        <dbReference type="Rhea" id="RHEA:49580"/>
        <dbReference type="ChEBI" id="CHEBI:33019"/>
        <dbReference type="ChEBI" id="CHEBI:59648"/>
        <dbReference type="ChEBI" id="CHEBI:131766"/>
        <dbReference type="EC" id="4.6.1.17"/>
    </reaction>
</comment>
<comment type="pathway">
    <text evidence="1">Cofactor biosynthesis; molybdopterin biosynthesis.</text>
</comment>
<comment type="subunit">
    <text evidence="1">Homohexamer; trimer of dimers.</text>
</comment>
<comment type="similarity">
    <text evidence="1">Belongs to the MoaC family.</text>
</comment>
<protein>
    <recommendedName>
        <fullName evidence="1">Cyclic pyranopterin monophosphate synthase</fullName>
        <ecNumber evidence="1">4.6.1.17</ecNumber>
    </recommendedName>
    <alternativeName>
        <fullName evidence="1">Molybdenum cofactor biosynthesis protein C</fullName>
    </alternativeName>
</protein>
<proteinExistence type="inferred from homology"/>
<dbReference type="EC" id="4.6.1.17" evidence="1"/>
<dbReference type="EMBL" id="AL596167">
    <property type="protein sequence ID" value="CAC96269.1"/>
    <property type="molecule type" value="Genomic_DNA"/>
</dbReference>
<dbReference type="PIR" id="AE1562">
    <property type="entry name" value="AE1562"/>
</dbReference>
<dbReference type="RefSeq" id="WP_010990724.1">
    <property type="nucleotide sequence ID" value="NC_003212.1"/>
</dbReference>
<dbReference type="SMR" id="Q92CY3"/>
<dbReference type="STRING" id="272626.gene:17565368"/>
<dbReference type="KEGG" id="lin:lin1038"/>
<dbReference type="eggNOG" id="COG0315">
    <property type="taxonomic scope" value="Bacteria"/>
</dbReference>
<dbReference type="HOGENOM" id="CLU_074693_1_1_9"/>
<dbReference type="OrthoDB" id="9794429at2"/>
<dbReference type="UniPathway" id="UPA00344"/>
<dbReference type="Proteomes" id="UP000002513">
    <property type="component" value="Chromosome"/>
</dbReference>
<dbReference type="GO" id="GO:0061799">
    <property type="term" value="F:cyclic pyranopterin monophosphate synthase activity"/>
    <property type="evidence" value="ECO:0007669"/>
    <property type="project" value="UniProtKB-UniRule"/>
</dbReference>
<dbReference type="GO" id="GO:0006777">
    <property type="term" value="P:Mo-molybdopterin cofactor biosynthetic process"/>
    <property type="evidence" value="ECO:0007669"/>
    <property type="project" value="UniProtKB-UniRule"/>
</dbReference>
<dbReference type="CDD" id="cd01420">
    <property type="entry name" value="MoaC_PE"/>
    <property type="match status" value="1"/>
</dbReference>
<dbReference type="Gene3D" id="3.30.70.640">
    <property type="entry name" value="Molybdopterin cofactor biosynthesis C (MoaC) domain"/>
    <property type="match status" value="1"/>
</dbReference>
<dbReference type="HAMAP" id="MF_01224_B">
    <property type="entry name" value="MoaC_B"/>
    <property type="match status" value="1"/>
</dbReference>
<dbReference type="InterPro" id="IPR023045">
    <property type="entry name" value="MoaC"/>
</dbReference>
<dbReference type="InterPro" id="IPR047594">
    <property type="entry name" value="MoaC_bact/euk"/>
</dbReference>
<dbReference type="InterPro" id="IPR036522">
    <property type="entry name" value="MoaC_sf"/>
</dbReference>
<dbReference type="InterPro" id="IPR050105">
    <property type="entry name" value="MoCo_biosynth_MoaA/MoaC"/>
</dbReference>
<dbReference type="InterPro" id="IPR002820">
    <property type="entry name" value="Mopterin_CF_biosynth-C_dom"/>
</dbReference>
<dbReference type="NCBIfam" id="TIGR00581">
    <property type="entry name" value="moaC"/>
    <property type="match status" value="1"/>
</dbReference>
<dbReference type="NCBIfam" id="NF006870">
    <property type="entry name" value="PRK09364.1"/>
    <property type="match status" value="1"/>
</dbReference>
<dbReference type="PANTHER" id="PTHR22960">
    <property type="entry name" value="MOLYBDOPTERIN COFACTOR SYNTHESIS PROTEIN A"/>
    <property type="match status" value="1"/>
</dbReference>
<dbReference type="Pfam" id="PF01967">
    <property type="entry name" value="MoaC"/>
    <property type="match status" value="1"/>
</dbReference>
<dbReference type="SUPFAM" id="SSF55040">
    <property type="entry name" value="Molybdenum cofactor biosynthesis protein C, MoaC"/>
    <property type="match status" value="1"/>
</dbReference>
<accession>Q92CY3</accession>